<comment type="subcellular location">
    <subcellularLocation>
        <location evidence="1">Membrane</location>
        <topology evidence="1">Multi-pass membrane protein</topology>
    </subcellularLocation>
</comment>
<comment type="similarity">
    <text evidence="2">Belongs to the 4-toluene sulfonate uptake permease (TSUP) (TC 2.A.102) family.</text>
</comment>
<comment type="sequence caution" evidence="2">
    <conflict type="erroneous gene model prediction">
        <sequence resource="EMBL-CDS" id="AAF16643"/>
    </conflict>
</comment>
<comment type="sequence caution" evidence="2">
    <conflict type="erroneous initiation">
        <sequence resource="EMBL-CDS" id="AEE28749"/>
    </conflict>
    <text>Truncated N-terminus.</text>
</comment>
<gene>
    <name evidence="3" type="ordered locus">At1g11540</name>
    <name evidence="4" type="ORF">T23J18.20</name>
</gene>
<organism>
    <name type="scientific">Arabidopsis thaliana</name>
    <name type="common">Mouse-ear cress</name>
    <dbReference type="NCBI Taxonomy" id="3702"/>
    <lineage>
        <taxon>Eukaryota</taxon>
        <taxon>Viridiplantae</taxon>
        <taxon>Streptophyta</taxon>
        <taxon>Embryophyta</taxon>
        <taxon>Tracheophyta</taxon>
        <taxon>Spermatophyta</taxon>
        <taxon>Magnoliopsida</taxon>
        <taxon>eudicotyledons</taxon>
        <taxon>Gunneridae</taxon>
        <taxon>Pentapetalae</taxon>
        <taxon>rosids</taxon>
        <taxon>malvids</taxon>
        <taxon>Brassicales</taxon>
        <taxon>Brassicaceae</taxon>
        <taxon>Camelineae</taxon>
        <taxon>Arabidopsis</taxon>
    </lineage>
</organism>
<protein>
    <recommendedName>
        <fullName evidence="5">Sulfite exporter TauE/SafE family protein 1</fullName>
    </recommendedName>
</protein>
<proteinExistence type="evidence at transcript level"/>
<sequence>MTINLVPLLLSLITIFTIFNPSALADQSQIRSTTSQWLHFSEDLSQSTIEVSIPTIIAAVLSFFAASISSAGGIGGGGLFLSIMTIIAGLEMKTASSFSAFMVTGVSFANVGCNLFLRNPKSRDKTLIDFDLALTIQPCLLLGVSIGVICNRMFPNWLVLFLFAVFLAWSTMKTCKKGVSYWNLESERAKIKSPRDVDGIEVARSPLLSEEREDVRQRGMIRFPWMKLGVLVIIWLLFFSINLFRGNKYGQGIISIKPCGALYWFLSSLQIPLTIFFTLCIYFSDNVQSNHTSHSNQNSEQETGVGGRQNKLMLPVMALLAGVLGGLFGIGGGMLISPLLLQIGIAPEVTAATCSFMVLFSSSMSAIQYLLLGMEHAGTAAIFALVCFVASLVGLMVVKKVIAKYGRASIIVFAVGIVMALSTVLMTTHGAFNVWNDFVSGRYMGFKLPC</sequence>
<dbReference type="EMBL" id="AC011661">
    <property type="protein sequence ID" value="AAF16643.1"/>
    <property type="status" value="ALT_SEQ"/>
    <property type="molecule type" value="Genomic_DNA"/>
</dbReference>
<dbReference type="EMBL" id="CP002684">
    <property type="protein sequence ID" value="AEE28749.1"/>
    <property type="status" value="ALT_INIT"/>
    <property type="molecule type" value="Genomic_DNA"/>
</dbReference>
<dbReference type="EMBL" id="CP002684">
    <property type="protein sequence ID" value="ANM59155.1"/>
    <property type="molecule type" value="Genomic_DNA"/>
</dbReference>
<dbReference type="EMBL" id="BX817018">
    <property type="status" value="NOT_ANNOTATED_CDS"/>
    <property type="molecule type" value="mRNA"/>
</dbReference>
<dbReference type="RefSeq" id="NP_001321541.1">
    <property type="nucleotide sequence ID" value="NM_001331994.1"/>
</dbReference>
<dbReference type="RefSeq" id="NP_172621.2">
    <property type="nucleotide sequence ID" value="NM_101027.4"/>
</dbReference>
<dbReference type="FunCoup" id="F4I8X6">
    <property type="interactions" value="97"/>
</dbReference>
<dbReference type="IntAct" id="F4I8X6">
    <property type="interactions" value="26"/>
</dbReference>
<dbReference type="STRING" id="3702.F4I8X6"/>
<dbReference type="iPTMnet" id="F4I8X6"/>
<dbReference type="PaxDb" id="3702-AT1G11540.1"/>
<dbReference type="ProteomicsDB" id="234235"/>
<dbReference type="EnsemblPlants" id="AT1G11540.2">
    <property type="protein sequence ID" value="AT1G11540.2"/>
    <property type="gene ID" value="AT1G11540"/>
</dbReference>
<dbReference type="GeneID" id="837697"/>
<dbReference type="Gramene" id="AT1G11540.2">
    <property type="protein sequence ID" value="AT1G11540.2"/>
    <property type="gene ID" value="AT1G11540"/>
</dbReference>
<dbReference type="KEGG" id="ath:AT1G11540"/>
<dbReference type="Araport" id="AT1G11540"/>
<dbReference type="TAIR" id="AT1G11540"/>
<dbReference type="eggNOG" id="ENOG502QUAQ">
    <property type="taxonomic scope" value="Eukaryota"/>
</dbReference>
<dbReference type="HOGENOM" id="CLU_029011_0_0_1"/>
<dbReference type="InParanoid" id="F4I8X6"/>
<dbReference type="OMA" id="VINRCWP"/>
<dbReference type="PRO" id="PR:F4I8X6"/>
<dbReference type="Proteomes" id="UP000006548">
    <property type="component" value="Chromosome 1"/>
</dbReference>
<dbReference type="ExpressionAtlas" id="F4I8X6">
    <property type="expression patterns" value="baseline and differential"/>
</dbReference>
<dbReference type="GO" id="GO:0016020">
    <property type="term" value="C:membrane"/>
    <property type="evidence" value="ECO:0007669"/>
    <property type="project" value="UniProtKB-SubCell"/>
</dbReference>
<dbReference type="InterPro" id="IPR002781">
    <property type="entry name" value="TM_pro_TauE-like"/>
</dbReference>
<dbReference type="PANTHER" id="PTHR14255">
    <property type="entry name" value="CEREBLON"/>
    <property type="match status" value="1"/>
</dbReference>
<dbReference type="PANTHER" id="PTHR14255:SF59">
    <property type="entry name" value="SULFITE EXPORTER TAUE_SAFE FAMILY PROTEIN 1-RELATED"/>
    <property type="match status" value="1"/>
</dbReference>
<dbReference type="Pfam" id="PF01925">
    <property type="entry name" value="TauE"/>
    <property type="match status" value="2"/>
</dbReference>
<name>TAUE1_ARATH</name>
<accession>F4I8X6</accession>
<accession>A0A1P8AR71</accession>
<accession>Q9LPY2</accession>
<keyword id="KW-0472">Membrane</keyword>
<keyword id="KW-1185">Reference proteome</keyword>
<keyword id="KW-0812">Transmembrane</keyword>
<keyword id="KW-1133">Transmembrane helix</keyword>
<keyword id="KW-0813">Transport</keyword>
<feature type="chain" id="PRO_0000439272" description="Sulfite exporter TauE/SafE family protein 1" evidence="1">
    <location>
        <begin position="1"/>
        <end position="450"/>
    </location>
</feature>
<feature type="transmembrane region" description="Helical" evidence="1">
    <location>
        <begin position="5"/>
        <end position="25"/>
    </location>
</feature>
<feature type="transmembrane region" description="Helical" evidence="1">
    <location>
        <begin position="48"/>
        <end position="68"/>
    </location>
</feature>
<feature type="transmembrane region" description="Helical" evidence="1">
    <location>
        <begin position="70"/>
        <end position="90"/>
    </location>
</feature>
<feature type="transmembrane region" description="Helical" evidence="1">
    <location>
        <begin position="97"/>
        <end position="117"/>
    </location>
</feature>
<feature type="transmembrane region" description="Helical" evidence="1">
    <location>
        <begin position="130"/>
        <end position="150"/>
    </location>
</feature>
<feature type="transmembrane region" description="Helical" evidence="1">
    <location>
        <begin position="153"/>
        <end position="173"/>
    </location>
</feature>
<feature type="transmembrane region" description="Helical" evidence="1">
    <location>
        <begin position="223"/>
        <end position="243"/>
    </location>
</feature>
<feature type="transmembrane region" description="Helical" evidence="1">
    <location>
        <begin position="261"/>
        <end position="281"/>
    </location>
</feature>
<feature type="transmembrane region" description="Helical" evidence="1">
    <location>
        <begin position="316"/>
        <end position="336"/>
    </location>
</feature>
<feature type="transmembrane region" description="Helical" evidence="1">
    <location>
        <begin position="340"/>
        <end position="360"/>
    </location>
</feature>
<feature type="transmembrane region" description="Helical" evidence="1">
    <location>
        <begin position="378"/>
        <end position="398"/>
    </location>
</feature>
<feature type="transmembrane region" description="Helical" evidence="1">
    <location>
        <begin position="408"/>
        <end position="428"/>
    </location>
</feature>
<feature type="sequence conflict" description="In Ref. 3; BX817018." evidence="2" ref="3">
    <original>R</original>
    <variation>K</variation>
    <location>
        <position position="218"/>
    </location>
</feature>
<evidence type="ECO:0000255" key="1"/>
<evidence type="ECO:0000305" key="2"/>
<evidence type="ECO:0000312" key="3">
    <source>
        <dbReference type="Araport" id="AT1G11540"/>
    </source>
</evidence>
<evidence type="ECO:0000312" key="4">
    <source>
        <dbReference type="EMBL" id="AAF16643.1"/>
    </source>
</evidence>
<evidence type="ECO:0000312" key="5">
    <source>
        <dbReference type="EMBL" id="AEE28749.1"/>
    </source>
</evidence>
<reference key="1">
    <citation type="journal article" date="2000" name="Nature">
        <title>Sequence and analysis of chromosome 1 of the plant Arabidopsis thaliana.</title>
        <authorList>
            <person name="Theologis A."/>
            <person name="Ecker J.R."/>
            <person name="Palm C.J."/>
            <person name="Federspiel N.A."/>
            <person name="Kaul S."/>
            <person name="White O."/>
            <person name="Alonso J."/>
            <person name="Altafi H."/>
            <person name="Araujo R."/>
            <person name="Bowman C.L."/>
            <person name="Brooks S.Y."/>
            <person name="Buehler E."/>
            <person name="Chan A."/>
            <person name="Chao Q."/>
            <person name="Chen H."/>
            <person name="Cheuk R.F."/>
            <person name="Chin C.W."/>
            <person name="Chung M.K."/>
            <person name="Conn L."/>
            <person name="Conway A.B."/>
            <person name="Conway A.R."/>
            <person name="Creasy T.H."/>
            <person name="Dewar K."/>
            <person name="Dunn P."/>
            <person name="Etgu P."/>
            <person name="Feldblyum T.V."/>
            <person name="Feng J.-D."/>
            <person name="Fong B."/>
            <person name="Fujii C.Y."/>
            <person name="Gill J.E."/>
            <person name="Goldsmith A.D."/>
            <person name="Haas B."/>
            <person name="Hansen N.F."/>
            <person name="Hughes B."/>
            <person name="Huizar L."/>
            <person name="Hunter J.L."/>
            <person name="Jenkins J."/>
            <person name="Johnson-Hopson C."/>
            <person name="Khan S."/>
            <person name="Khaykin E."/>
            <person name="Kim C.J."/>
            <person name="Koo H.L."/>
            <person name="Kremenetskaia I."/>
            <person name="Kurtz D.B."/>
            <person name="Kwan A."/>
            <person name="Lam B."/>
            <person name="Langin-Hooper S."/>
            <person name="Lee A."/>
            <person name="Lee J.M."/>
            <person name="Lenz C.A."/>
            <person name="Li J.H."/>
            <person name="Li Y.-P."/>
            <person name="Lin X."/>
            <person name="Liu S.X."/>
            <person name="Liu Z.A."/>
            <person name="Luros J.S."/>
            <person name="Maiti R."/>
            <person name="Marziali A."/>
            <person name="Militscher J."/>
            <person name="Miranda M."/>
            <person name="Nguyen M."/>
            <person name="Nierman W.C."/>
            <person name="Osborne B.I."/>
            <person name="Pai G."/>
            <person name="Peterson J."/>
            <person name="Pham P.K."/>
            <person name="Rizzo M."/>
            <person name="Rooney T."/>
            <person name="Rowley D."/>
            <person name="Sakano H."/>
            <person name="Salzberg S.L."/>
            <person name="Schwartz J.R."/>
            <person name="Shinn P."/>
            <person name="Southwick A.M."/>
            <person name="Sun H."/>
            <person name="Tallon L.J."/>
            <person name="Tambunga G."/>
            <person name="Toriumi M.J."/>
            <person name="Town C.D."/>
            <person name="Utterback T."/>
            <person name="Van Aken S."/>
            <person name="Vaysberg M."/>
            <person name="Vysotskaia V.S."/>
            <person name="Walker M."/>
            <person name="Wu D."/>
            <person name="Yu G."/>
            <person name="Fraser C.M."/>
            <person name="Venter J.C."/>
            <person name="Davis R.W."/>
        </authorList>
    </citation>
    <scope>NUCLEOTIDE SEQUENCE [LARGE SCALE GENOMIC DNA]</scope>
    <source>
        <strain>cv. Columbia</strain>
    </source>
</reference>
<reference key="2">
    <citation type="journal article" date="2017" name="Plant J.">
        <title>Araport11: a complete reannotation of the Arabidopsis thaliana reference genome.</title>
        <authorList>
            <person name="Cheng C.Y."/>
            <person name="Krishnakumar V."/>
            <person name="Chan A.P."/>
            <person name="Thibaud-Nissen F."/>
            <person name="Schobel S."/>
            <person name="Town C.D."/>
        </authorList>
    </citation>
    <scope>GENOME REANNOTATION</scope>
    <source>
        <strain>cv. Columbia</strain>
    </source>
</reference>
<reference key="3">
    <citation type="journal article" date="2004" name="Genome Res.">
        <title>Whole genome sequence comparisons and 'full-length' cDNA sequences: a combined approach to evaluate and improve Arabidopsis genome annotation.</title>
        <authorList>
            <person name="Castelli V."/>
            <person name="Aury J.-M."/>
            <person name="Jaillon O."/>
            <person name="Wincker P."/>
            <person name="Clepet C."/>
            <person name="Menard M."/>
            <person name="Cruaud C."/>
            <person name="Quetier F."/>
            <person name="Scarpelli C."/>
            <person name="Schaechter V."/>
            <person name="Temple G."/>
            <person name="Caboche M."/>
            <person name="Weissenbach J."/>
            <person name="Salanoubat M."/>
        </authorList>
    </citation>
    <scope>NUCLEOTIDE SEQUENCE [LARGE SCALE MRNA] OF 24-450</scope>
    <source>
        <strain>cv. Columbia</strain>
    </source>
</reference>